<evidence type="ECO:0000255" key="1"/>
<evidence type="ECO:0000256" key="2">
    <source>
        <dbReference type="SAM" id="MobiDB-lite"/>
    </source>
</evidence>
<evidence type="ECO:0000269" key="3">
    <source>
    </source>
</evidence>
<evidence type="ECO:0000269" key="4">
    <source>
    </source>
</evidence>
<evidence type="ECO:0000303" key="5">
    <source>
    </source>
</evidence>
<evidence type="ECO:0000305" key="6"/>
<evidence type="ECO:0000305" key="7">
    <source>
    </source>
</evidence>
<accession>A0A172M477</accession>
<reference key="1">
    <citation type="journal article" date="2016" name="Front. Microbiol.">
        <title>Studying the mechanism of Plasmopara viticola RxLR effectors on suppressing plant immunity.</title>
        <authorList>
            <person name="Xiang J."/>
            <person name="Li X."/>
            <person name="Wu J."/>
            <person name="Yin L."/>
            <person name="Zhang Y."/>
            <person name="Lu J."/>
        </authorList>
    </citation>
    <scope>NUCLEOTIDE SEQUENCE [MRNA]</scope>
    <scope>INDUCTION</scope>
    <scope>FUNCTION</scope>
    <scope>SUBCELLULAR LOCATION</scope>
    <scope>DOMAIN</scope>
    <source>
        <strain>ZJ-1-1</strain>
    </source>
</reference>
<reference key="2">
    <citation type="journal article" date="2018" name="Fungal Biol.">
        <title>Up-regulated RxLR effector genes of Plasmopara viticola in synchronized host-free stages and infected leaves of hosts with different susceptibility.</title>
        <authorList>
            <person name="Gomez-Zeledon J."/>
            <person name="Spring O."/>
        </authorList>
    </citation>
    <scope>INDUCTION</scope>
</reference>
<protein>
    <recommendedName>
        <fullName evidence="5">Secreted RxLR effector protein 67</fullName>
    </recommendedName>
</protein>
<proteinExistence type="evidence at transcript level"/>
<gene>
    <name evidence="5" type="primary">RxLR67</name>
</gene>
<comment type="function">
    <text evidence="3">Effector that partially suppresses the tobacco programmed cell death induced by cell death-inducing proteins.</text>
</comment>
<comment type="subcellular location">
    <subcellularLocation>
        <location evidence="3">Secreted</location>
    </subcellularLocation>
    <subcellularLocation>
        <location evidence="3">Host cytoplasm</location>
    </subcellularLocation>
    <subcellularLocation>
        <location evidence="3">Host nucleus</location>
    </subcellularLocation>
    <subcellularLocation>
        <location evidence="1">Membrane</location>
        <topology evidence="1">Single-pass membrane protein</topology>
    </subcellularLocation>
</comment>
<comment type="induction">
    <text evidence="3 4">Expression is up-regulated at later stages of infection.</text>
</comment>
<comment type="domain">
    <text evidence="7">The RxLR-dEER motif acts to carry the protein into the host cell cytoplasm through binding to cell surface phosphatidylinositol-3-phosphate.</text>
</comment>
<comment type="similarity">
    <text evidence="6">Belongs to the RxLR effector family.</text>
</comment>
<name>RLR67_PLAVT</name>
<feature type="signal peptide" evidence="1">
    <location>
        <begin position="1"/>
        <end position="18"/>
    </location>
</feature>
<feature type="chain" id="PRO_5007999425" description="Secreted RxLR effector protein 67">
    <location>
        <begin position="19"/>
        <end position="137"/>
    </location>
</feature>
<feature type="transmembrane region" description="Helical" evidence="1">
    <location>
        <begin position="114"/>
        <end position="134"/>
    </location>
</feature>
<feature type="region of interest" description="Disordered" evidence="2">
    <location>
        <begin position="40"/>
        <end position="65"/>
    </location>
</feature>
<feature type="short sequence motif" description="RxLR-dEER" evidence="7">
    <location>
        <begin position="32"/>
        <end position="61"/>
    </location>
</feature>
<sequence length="137" mass="15897">MRLYILVLAAIAVTLVFASSGPAITYHEVGTRALRQASITDEKSDDSLNAQAPPLSKSEKRLSRSFRTTSRRLPYTNYYHPQYYHPQNYHPHYNYPQYHSSPHVYVHQESKKSWFVRMILEAGIFWAVFHCLSAAFC</sequence>
<keyword id="KW-1035">Host cytoplasm</keyword>
<keyword id="KW-1048">Host nucleus</keyword>
<keyword id="KW-0472">Membrane</keyword>
<keyword id="KW-0964">Secreted</keyword>
<keyword id="KW-0732">Signal</keyword>
<keyword id="KW-0812">Transmembrane</keyword>
<keyword id="KW-1133">Transmembrane helix</keyword>
<keyword id="KW-0843">Virulence</keyword>
<dbReference type="EMBL" id="KX010967">
    <property type="protein sequence ID" value="ANC73387.1"/>
    <property type="molecule type" value="mRNA"/>
</dbReference>
<dbReference type="GO" id="GO:0005576">
    <property type="term" value="C:extracellular region"/>
    <property type="evidence" value="ECO:0007669"/>
    <property type="project" value="UniProtKB-SubCell"/>
</dbReference>
<dbReference type="GO" id="GO:0030430">
    <property type="term" value="C:host cell cytoplasm"/>
    <property type="evidence" value="ECO:0007669"/>
    <property type="project" value="UniProtKB-SubCell"/>
</dbReference>
<dbReference type="GO" id="GO:0042025">
    <property type="term" value="C:host cell nucleus"/>
    <property type="evidence" value="ECO:0007669"/>
    <property type="project" value="UniProtKB-SubCell"/>
</dbReference>
<dbReference type="GO" id="GO:0016020">
    <property type="term" value="C:membrane"/>
    <property type="evidence" value="ECO:0007669"/>
    <property type="project" value="UniProtKB-SubCell"/>
</dbReference>
<organism>
    <name type="scientific">Plasmopara viticola</name>
    <name type="common">Downy mildew of grapevine</name>
    <name type="synonym">Botrytis viticola</name>
    <dbReference type="NCBI Taxonomy" id="143451"/>
    <lineage>
        <taxon>Eukaryota</taxon>
        <taxon>Sar</taxon>
        <taxon>Stramenopiles</taxon>
        <taxon>Oomycota</taxon>
        <taxon>Peronosporales</taxon>
        <taxon>Peronosporaceae</taxon>
        <taxon>Plasmopara</taxon>
    </lineage>
</organism>